<comment type="subcellular location">
    <subcellularLocation>
        <location evidence="1">Plastid</location>
        <location evidence="1">Chloroplast thylakoid</location>
    </subcellularLocation>
</comment>
<comment type="miscellaneous">
    <text evidence="1">On the 2D-gel the determined pI of this protein is: 6.3, its MW is: 21.3 kDa.</text>
</comment>
<reference evidence="3" key="1">
    <citation type="journal article" date="2000" name="Plant Cell">
        <title>Proteomics of the chloroplast: systematic identification and targeting analysis of lumenal and peripheral thylakoid proteins.</title>
        <authorList>
            <person name="Peltier J.-B."/>
            <person name="Friso G."/>
            <person name="Kalume D.E."/>
            <person name="Roepstorff P."/>
            <person name="Nilsson F."/>
            <person name="Adamska I."/>
            <person name="van Wijk K.J."/>
        </authorList>
    </citation>
    <scope>PROTEIN SEQUENCE</scope>
    <scope>SUBCELLULAR LOCATION</scope>
    <source>
        <strain evidence="1">cv. De Grace</strain>
        <tissue evidence="1">Leaf</tissue>
    </source>
</reference>
<evidence type="ECO:0000269" key="1">
    <source>
    </source>
</evidence>
<evidence type="ECO:0000303" key="2">
    <source>
    </source>
</evidence>
<evidence type="ECO:0000305" key="3"/>
<protein>
    <recommendedName>
        <fullName>Unknown protein from spot 108 of 2D-PAGE of thylakoid</fullName>
    </recommendedName>
</protein>
<sequence length="14" mass="1421">VVKQGLLAGRIPGL</sequence>
<accession>P82327</accession>
<keyword id="KW-0150">Chloroplast</keyword>
<keyword id="KW-0903">Direct protein sequencing</keyword>
<keyword id="KW-0934">Plastid</keyword>
<keyword id="KW-0793">Thylakoid</keyword>
<name>UT108_PEA</name>
<feature type="chain" id="PRO_0000234471" description="Unknown protein from spot 108 of 2D-PAGE of thylakoid">
    <location>
        <begin position="1"/>
        <end position="14" status="greater than"/>
    </location>
</feature>
<feature type="non-terminal residue" evidence="2">
    <location>
        <position position="14"/>
    </location>
</feature>
<organism>
    <name type="scientific">Pisum sativum</name>
    <name type="common">Garden pea</name>
    <name type="synonym">Lathyrus oleraceus</name>
    <dbReference type="NCBI Taxonomy" id="3888"/>
    <lineage>
        <taxon>Eukaryota</taxon>
        <taxon>Viridiplantae</taxon>
        <taxon>Streptophyta</taxon>
        <taxon>Embryophyta</taxon>
        <taxon>Tracheophyta</taxon>
        <taxon>Spermatophyta</taxon>
        <taxon>Magnoliopsida</taxon>
        <taxon>eudicotyledons</taxon>
        <taxon>Gunneridae</taxon>
        <taxon>Pentapetalae</taxon>
        <taxon>rosids</taxon>
        <taxon>fabids</taxon>
        <taxon>Fabales</taxon>
        <taxon>Fabaceae</taxon>
        <taxon>Papilionoideae</taxon>
        <taxon>50 kb inversion clade</taxon>
        <taxon>NPAAA clade</taxon>
        <taxon>Hologalegina</taxon>
        <taxon>IRL clade</taxon>
        <taxon>Fabeae</taxon>
        <taxon>Pisum</taxon>
    </lineage>
</organism>
<dbReference type="GO" id="GO:0009534">
    <property type="term" value="C:chloroplast thylakoid"/>
    <property type="evidence" value="ECO:0007669"/>
    <property type="project" value="UniProtKB-SubCell"/>
</dbReference>
<proteinExistence type="evidence at protein level"/>